<accession>C3PP47</accession>
<keyword id="KW-0687">Ribonucleoprotein</keyword>
<keyword id="KW-0689">Ribosomal protein</keyword>
<keyword id="KW-0694">RNA-binding</keyword>
<keyword id="KW-0699">rRNA-binding</keyword>
<organism>
    <name type="scientific">Rickettsia africae (strain ESF-5)</name>
    <dbReference type="NCBI Taxonomy" id="347255"/>
    <lineage>
        <taxon>Bacteria</taxon>
        <taxon>Pseudomonadati</taxon>
        <taxon>Pseudomonadota</taxon>
        <taxon>Alphaproteobacteria</taxon>
        <taxon>Rickettsiales</taxon>
        <taxon>Rickettsiaceae</taxon>
        <taxon>Rickettsieae</taxon>
        <taxon>Rickettsia</taxon>
        <taxon>spotted fever group</taxon>
    </lineage>
</organism>
<protein>
    <recommendedName>
        <fullName evidence="1">Large ribosomal subunit protein bL25</fullName>
    </recommendedName>
    <alternativeName>
        <fullName evidence="2">50S ribosomal protein L25</fullName>
    </alternativeName>
    <alternativeName>
        <fullName evidence="1">General stress protein CTC</fullName>
    </alternativeName>
</protein>
<name>RL25_RICAE</name>
<reference key="1">
    <citation type="journal article" date="2009" name="BMC Genomics">
        <title>Analysis of the Rickettsia africae genome reveals that virulence acquisition in Rickettsia species may be explained by genome reduction.</title>
        <authorList>
            <person name="Fournier P.-E."/>
            <person name="El Karkouri K."/>
            <person name="Leroy Q."/>
            <person name="Robert C."/>
            <person name="Giumelli B."/>
            <person name="Renesto P."/>
            <person name="Socolovschi C."/>
            <person name="Parola P."/>
            <person name="Audic S."/>
            <person name="Raoult D."/>
        </authorList>
    </citation>
    <scope>NUCLEOTIDE SEQUENCE [LARGE SCALE GENOMIC DNA]</scope>
    <source>
        <strain>ESF-5</strain>
    </source>
</reference>
<dbReference type="EMBL" id="CP001612">
    <property type="protein sequence ID" value="ACP53707.1"/>
    <property type="molecule type" value="Genomic_DNA"/>
</dbReference>
<dbReference type="RefSeq" id="WP_012719890.1">
    <property type="nucleotide sequence ID" value="NC_012633.1"/>
</dbReference>
<dbReference type="SMR" id="C3PP47"/>
<dbReference type="KEGG" id="raf:RAF_ORF0844"/>
<dbReference type="HOGENOM" id="CLU_075939_0_0_5"/>
<dbReference type="Proteomes" id="UP000002305">
    <property type="component" value="Chromosome"/>
</dbReference>
<dbReference type="GO" id="GO:0022625">
    <property type="term" value="C:cytosolic large ribosomal subunit"/>
    <property type="evidence" value="ECO:0007669"/>
    <property type="project" value="TreeGrafter"/>
</dbReference>
<dbReference type="GO" id="GO:0008097">
    <property type="term" value="F:5S rRNA binding"/>
    <property type="evidence" value="ECO:0007669"/>
    <property type="project" value="InterPro"/>
</dbReference>
<dbReference type="GO" id="GO:0003735">
    <property type="term" value="F:structural constituent of ribosome"/>
    <property type="evidence" value="ECO:0007669"/>
    <property type="project" value="InterPro"/>
</dbReference>
<dbReference type="GO" id="GO:0006412">
    <property type="term" value="P:translation"/>
    <property type="evidence" value="ECO:0007669"/>
    <property type="project" value="UniProtKB-UniRule"/>
</dbReference>
<dbReference type="CDD" id="cd00495">
    <property type="entry name" value="Ribosomal_L25_TL5_CTC"/>
    <property type="match status" value="1"/>
</dbReference>
<dbReference type="Gene3D" id="2.170.120.20">
    <property type="entry name" value="Ribosomal protein L25, beta domain"/>
    <property type="match status" value="1"/>
</dbReference>
<dbReference type="Gene3D" id="2.40.240.10">
    <property type="entry name" value="Ribosomal Protein L25, Chain P"/>
    <property type="match status" value="1"/>
</dbReference>
<dbReference type="HAMAP" id="MF_01336">
    <property type="entry name" value="Ribosomal_bL25"/>
    <property type="match status" value="1"/>
</dbReference>
<dbReference type="HAMAP" id="MF_01334">
    <property type="entry name" value="Ribosomal_bL25_CTC"/>
    <property type="match status" value="1"/>
</dbReference>
<dbReference type="InterPro" id="IPR020056">
    <property type="entry name" value="Rbsml_bL25/Gln-tRNA_synth_N"/>
</dbReference>
<dbReference type="InterPro" id="IPR011035">
    <property type="entry name" value="Ribosomal_bL25/Gln-tRNA_synth"/>
</dbReference>
<dbReference type="InterPro" id="IPR020057">
    <property type="entry name" value="Ribosomal_bL25_b-dom"/>
</dbReference>
<dbReference type="InterPro" id="IPR037121">
    <property type="entry name" value="Ribosomal_bL25_C"/>
</dbReference>
<dbReference type="InterPro" id="IPR001021">
    <property type="entry name" value="Ribosomal_bL25_long"/>
</dbReference>
<dbReference type="InterPro" id="IPR020055">
    <property type="entry name" value="Ribosomal_bL25_short"/>
</dbReference>
<dbReference type="InterPro" id="IPR029751">
    <property type="entry name" value="Ribosomal_L25_dom"/>
</dbReference>
<dbReference type="InterPro" id="IPR020930">
    <property type="entry name" value="Ribosomal_uL5_bac-type"/>
</dbReference>
<dbReference type="NCBIfam" id="TIGR00731">
    <property type="entry name" value="bL25_bact_ctc"/>
    <property type="match status" value="1"/>
</dbReference>
<dbReference type="NCBIfam" id="NF004128">
    <property type="entry name" value="PRK05618.1-2"/>
    <property type="match status" value="1"/>
</dbReference>
<dbReference type="NCBIfam" id="NF004612">
    <property type="entry name" value="PRK05943.1"/>
    <property type="match status" value="1"/>
</dbReference>
<dbReference type="PANTHER" id="PTHR33284">
    <property type="entry name" value="RIBOSOMAL PROTEIN L25/GLN-TRNA SYNTHETASE, ANTI-CODON-BINDING DOMAIN-CONTAINING PROTEIN"/>
    <property type="match status" value="1"/>
</dbReference>
<dbReference type="PANTHER" id="PTHR33284:SF1">
    <property type="entry name" value="RIBOSOMAL PROTEIN L25_GLN-TRNA SYNTHETASE, ANTI-CODON-BINDING DOMAIN-CONTAINING PROTEIN"/>
    <property type="match status" value="1"/>
</dbReference>
<dbReference type="Pfam" id="PF01386">
    <property type="entry name" value="Ribosomal_L25p"/>
    <property type="match status" value="1"/>
</dbReference>
<dbReference type="Pfam" id="PF14693">
    <property type="entry name" value="Ribosomal_TL5_C"/>
    <property type="match status" value="1"/>
</dbReference>
<dbReference type="SUPFAM" id="SSF50715">
    <property type="entry name" value="Ribosomal protein L25-like"/>
    <property type="match status" value="1"/>
</dbReference>
<evidence type="ECO:0000255" key="1">
    <source>
        <dbReference type="HAMAP-Rule" id="MF_01334"/>
    </source>
</evidence>
<evidence type="ECO:0000305" key="2"/>
<comment type="function">
    <text evidence="1">This is one of the proteins that binds to the 5S RNA in the ribosome where it forms part of the central protuberance.</text>
</comment>
<comment type="subunit">
    <text evidence="1">Part of the 50S ribosomal subunit; part of the 5S rRNA/L5/L18/L25 subcomplex. Contacts the 5S rRNA. Binds to the 5S rRNA independently of L5 and L18.</text>
</comment>
<comment type="similarity">
    <text evidence="1">Belongs to the bacterial ribosomal protein bL25 family. CTC subfamily.</text>
</comment>
<sequence length="203" mass="22638">MSEILELEAESRTEFGTGAARALRRAGRVPAIIYGAGKTPVSISLEEKEITKYYRKPAFISQLINLTIDKKKYKVLPKAVELHPVTDIVRHVDFVFLEEKTQKMEVPVVYEGKERALGVKRGGYFNIVKRRVTLLCDVNNIPRNITIDVTNMPMATSLKSSKIELPKGCSFVTKKEFVLATIIGRRGAKTEAEGEQQAAEAGK</sequence>
<feature type="chain" id="PRO_1000214657" description="Large ribosomal subunit protein bL25">
    <location>
        <begin position="1"/>
        <end position="203"/>
    </location>
</feature>
<gene>
    <name evidence="1" type="primary">rplY</name>
    <name evidence="1" type="synonym">ctc</name>
    <name type="ordered locus">RAF_ORF0844</name>
</gene>
<proteinExistence type="inferred from homology"/>